<keyword id="KW-0378">Hydrolase</keyword>
<name>APAH_MARMS</name>
<comment type="function">
    <text evidence="1">Hydrolyzes diadenosine 5',5'''-P1,P4-tetraphosphate to yield ADP.</text>
</comment>
<comment type="catalytic activity">
    <reaction evidence="1">
        <text>P(1),P(4)-bis(5'-adenosyl) tetraphosphate + H2O = 2 ADP + 2 H(+)</text>
        <dbReference type="Rhea" id="RHEA:24252"/>
        <dbReference type="ChEBI" id="CHEBI:15377"/>
        <dbReference type="ChEBI" id="CHEBI:15378"/>
        <dbReference type="ChEBI" id="CHEBI:58141"/>
        <dbReference type="ChEBI" id="CHEBI:456216"/>
        <dbReference type="EC" id="3.6.1.41"/>
    </reaction>
</comment>
<comment type="similarity">
    <text evidence="1">Belongs to the Ap4A hydrolase family.</text>
</comment>
<sequence length="275" mass="31207">MATYVIGDLQGCLTPLVQLLEQINYHPEQDKLWFAGDLINRGEESLETLRFIKSLGNNATVVLGNHDLHLLAVSHGYGKLKRGDTLAEILTAGDRDDLMDWLRHQPLFHYDEQLNTVMTHAGIPPCWDLQKAQTLAKEVEDKLKSDSVDEFFATMYGNKPNTWSDDLTGLDRLRAITNYLTRMRFCDENSKLDLESKEGINTATKGYAPWFNYPTKVPEDCHIVFGHWAALEGKTQKERIHALDTGCVWGGSLTALRLEDQQRFSTPCSINRKNP</sequence>
<organism>
    <name type="scientific">Marinomonas sp. (strain MWYL1)</name>
    <dbReference type="NCBI Taxonomy" id="400668"/>
    <lineage>
        <taxon>Bacteria</taxon>
        <taxon>Pseudomonadati</taxon>
        <taxon>Pseudomonadota</taxon>
        <taxon>Gammaproteobacteria</taxon>
        <taxon>Oceanospirillales</taxon>
        <taxon>Oceanospirillaceae</taxon>
        <taxon>Marinomonas</taxon>
    </lineage>
</organism>
<gene>
    <name evidence="1" type="primary">apaH</name>
    <name type="ordered locus">Mmwyl1_1049</name>
</gene>
<protein>
    <recommendedName>
        <fullName evidence="1">Bis(5'-nucleosyl)-tetraphosphatase, symmetrical</fullName>
        <ecNumber evidence="1">3.6.1.41</ecNumber>
    </recommendedName>
    <alternativeName>
        <fullName evidence="1">Ap4A hydrolase</fullName>
    </alternativeName>
    <alternativeName>
        <fullName evidence="1">Diadenosine 5',5'''-P1,P4-tetraphosphate pyrophosphohydrolase</fullName>
    </alternativeName>
    <alternativeName>
        <fullName evidence="1">Diadenosine tetraphosphatase</fullName>
    </alternativeName>
</protein>
<feature type="chain" id="PRO_1000077716" description="Bis(5'-nucleosyl)-tetraphosphatase, symmetrical">
    <location>
        <begin position="1"/>
        <end position="275"/>
    </location>
</feature>
<accession>A6VU51</accession>
<proteinExistence type="inferred from homology"/>
<dbReference type="EC" id="3.6.1.41" evidence="1"/>
<dbReference type="EMBL" id="CP000749">
    <property type="protein sequence ID" value="ABR69980.1"/>
    <property type="molecule type" value="Genomic_DNA"/>
</dbReference>
<dbReference type="SMR" id="A6VU51"/>
<dbReference type="STRING" id="400668.Mmwyl1_1049"/>
<dbReference type="KEGG" id="mmw:Mmwyl1_1049"/>
<dbReference type="eggNOG" id="COG0639">
    <property type="taxonomic scope" value="Bacteria"/>
</dbReference>
<dbReference type="HOGENOM" id="CLU_056184_2_0_6"/>
<dbReference type="OrthoDB" id="9807890at2"/>
<dbReference type="GO" id="GO:0008803">
    <property type="term" value="F:bis(5'-nucleosyl)-tetraphosphatase (symmetrical) activity"/>
    <property type="evidence" value="ECO:0007669"/>
    <property type="project" value="UniProtKB-UniRule"/>
</dbReference>
<dbReference type="CDD" id="cd07422">
    <property type="entry name" value="MPP_ApaH"/>
    <property type="match status" value="1"/>
</dbReference>
<dbReference type="Gene3D" id="3.60.21.10">
    <property type="match status" value="1"/>
</dbReference>
<dbReference type="HAMAP" id="MF_00199">
    <property type="entry name" value="ApaH"/>
    <property type="match status" value="1"/>
</dbReference>
<dbReference type="InterPro" id="IPR004617">
    <property type="entry name" value="ApaH"/>
</dbReference>
<dbReference type="InterPro" id="IPR004843">
    <property type="entry name" value="Calcineurin-like_PHP_ApaH"/>
</dbReference>
<dbReference type="InterPro" id="IPR029052">
    <property type="entry name" value="Metallo-depent_PP-like"/>
</dbReference>
<dbReference type="NCBIfam" id="TIGR00668">
    <property type="entry name" value="apaH"/>
    <property type="match status" value="1"/>
</dbReference>
<dbReference type="NCBIfam" id="NF001204">
    <property type="entry name" value="PRK00166.1"/>
    <property type="match status" value="1"/>
</dbReference>
<dbReference type="PANTHER" id="PTHR40942">
    <property type="match status" value="1"/>
</dbReference>
<dbReference type="PANTHER" id="PTHR40942:SF4">
    <property type="entry name" value="CYTOCHROME C5"/>
    <property type="match status" value="1"/>
</dbReference>
<dbReference type="Pfam" id="PF00149">
    <property type="entry name" value="Metallophos"/>
    <property type="match status" value="1"/>
</dbReference>
<dbReference type="PIRSF" id="PIRSF000903">
    <property type="entry name" value="B5n-ttraPtase_sm"/>
    <property type="match status" value="1"/>
</dbReference>
<dbReference type="SUPFAM" id="SSF56300">
    <property type="entry name" value="Metallo-dependent phosphatases"/>
    <property type="match status" value="1"/>
</dbReference>
<reference key="1">
    <citation type="submission" date="2007-06" db="EMBL/GenBank/DDBJ databases">
        <title>Complete sequence of Marinomonas sp. MWYL1.</title>
        <authorList>
            <consortium name="US DOE Joint Genome Institute"/>
            <person name="Copeland A."/>
            <person name="Lucas S."/>
            <person name="Lapidus A."/>
            <person name="Barry K."/>
            <person name="Glavina del Rio T."/>
            <person name="Dalin E."/>
            <person name="Tice H."/>
            <person name="Pitluck S."/>
            <person name="Kiss H."/>
            <person name="Brettin T."/>
            <person name="Bruce D."/>
            <person name="Detter J.C."/>
            <person name="Han C."/>
            <person name="Schmutz J."/>
            <person name="Larimer F."/>
            <person name="Land M."/>
            <person name="Hauser L."/>
            <person name="Kyrpides N."/>
            <person name="Kim E."/>
            <person name="Johnston A.W.B."/>
            <person name="Todd J.D."/>
            <person name="Rogers R."/>
            <person name="Wexler M."/>
            <person name="Bond P.L."/>
            <person name="Li Y."/>
            <person name="Richardson P."/>
        </authorList>
    </citation>
    <scope>NUCLEOTIDE SEQUENCE [LARGE SCALE GENOMIC DNA]</scope>
    <source>
        <strain>MWYL1</strain>
    </source>
</reference>
<evidence type="ECO:0000255" key="1">
    <source>
        <dbReference type="HAMAP-Rule" id="MF_00199"/>
    </source>
</evidence>